<evidence type="ECO:0000255" key="1"/>
<evidence type="ECO:0000255" key="2">
    <source>
        <dbReference type="PROSITE-ProRule" id="PRU00967"/>
    </source>
</evidence>
<evidence type="ECO:0000255" key="3">
    <source>
        <dbReference type="PROSITE-ProRule" id="PRU00968"/>
    </source>
</evidence>
<evidence type="ECO:0000305" key="4"/>
<feature type="chain" id="PRO_0000061777" description="Cytochrome b">
    <location>
        <begin position="1"/>
        <end position="563"/>
    </location>
</feature>
<feature type="transmembrane region" description="Helical" evidence="1">
    <location>
        <begin position="36"/>
        <end position="61"/>
    </location>
</feature>
<feature type="transmembrane region" description="Helical" evidence="1">
    <location>
        <begin position="81"/>
        <end position="104"/>
    </location>
</feature>
<feature type="transmembrane region" description="Helical" evidence="1">
    <location>
        <begin position="119"/>
        <end position="141"/>
    </location>
</feature>
<feature type="transmembrane region" description="Helical" evidence="1">
    <location>
        <begin position="193"/>
        <end position="220"/>
    </location>
</feature>
<feature type="transmembrane region" description="Helical" evidence="1">
    <location>
        <begin position="255"/>
        <end position="276"/>
    </location>
</feature>
<feature type="transmembrane region" description="Helical" evidence="1">
    <location>
        <begin position="326"/>
        <end position="345"/>
    </location>
</feature>
<feature type="transmembrane region" description="Helical" evidence="1">
    <location>
        <begin position="358"/>
        <end position="379"/>
    </location>
</feature>
<feature type="transmembrane region" description="Helical" evidence="1">
    <location>
        <begin position="387"/>
        <end position="409"/>
    </location>
</feature>
<feature type="transmembrane region" description="Helical" evidence="1">
    <location>
        <begin position="436"/>
        <end position="454"/>
    </location>
</feature>
<feature type="transmembrane region" description="Helical" evidence="1">
    <location>
        <begin position="458"/>
        <end position="476"/>
    </location>
</feature>
<feature type="transmembrane region" description="Helical" evidence="1">
    <location>
        <begin position="505"/>
        <end position="527"/>
    </location>
</feature>
<feature type="transmembrane region" description="Helical" evidence="1">
    <location>
        <begin position="539"/>
        <end position="557"/>
    </location>
</feature>
<feature type="binding site" description="axial binding residue" evidence="3">
    <location>
        <position position="87"/>
    </location>
    <ligand>
        <name>heme</name>
        <dbReference type="ChEBI" id="CHEBI:30413"/>
        <label>1</label>
    </ligand>
    <ligandPart>
        <name>Fe</name>
        <dbReference type="ChEBI" id="CHEBI:18248"/>
    </ligandPart>
</feature>
<feature type="binding site" description="axial binding residue" evidence="3">
    <location>
        <position position="101"/>
    </location>
    <ligand>
        <name>heme</name>
        <dbReference type="ChEBI" id="CHEBI:30413"/>
        <label>2</label>
    </ligand>
    <ligandPart>
        <name>Fe</name>
        <dbReference type="ChEBI" id="CHEBI:18248"/>
    </ligandPart>
</feature>
<feature type="binding site" description="axial binding residue" evidence="3">
    <location>
        <position position="198"/>
    </location>
    <ligand>
        <name>heme</name>
        <dbReference type="ChEBI" id="CHEBI:30413"/>
        <label>1</label>
    </ligand>
    <ligandPart>
        <name>Fe</name>
        <dbReference type="ChEBI" id="CHEBI:18248"/>
    </ligandPart>
</feature>
<feature type="binding site" description="axial binding residue" evidence="3">
    <location>
        <position position="212"/>
    </location>
    <ligand>
        <name>heme</name>
        <dbReference type="ChEBI" id="CHEBI:30413"/>
        <label>2</label>
    </ligand>
    <ligandPart>
        <name>Fe</name>
        <dbReference type="ChEBI" id="CHEBI:18248"/>
    </ligandPart>
</feature>
<proteinExistence type="inferred from homology"/>
<accession>P39480</accession>
<accession>Q4J750</accession>
<organism>
    <name type="scientific">Sulfolobus acidocaldarius (strain ATCC 33909 / DSM 639 / JCM 8929 / NBRC 15157 / NCIMB 11770)</name>
    <dbReference type="NCBI Taxonomy" id="330779"/>
    <lineage>
        <taxon>Archaea</taxon>
        <taxon>Thermoproteota</taxon>
        <taxon>Thermoprotei</taxon>
        <taxon>Sulfolobales</taxon>
        <taxon>Sulfolobaceae</taxon>
        <taxon>Sulfolobus</taxon>
    </lineage>
</organism>
<keyword id="KW-1003">Cell membrane</keyword>
<keyword id="KW-0249">Electron transport</keyword>
<keyword id="KW-0349">Heme</keyword>
<keyword id="KW-0408">Iron</keyword>
<keyword id="KW-0472">Membrane</keyword>
<keyword id="KW-0479">Metal-binding</keyword>
<keyword id="KW-1185">Reference proteome</keyword>
<keyword id="KW-0679">Respiratory chain</keyword>
<keyword id="KW-0812">Transmembrane</keyword>
<keyword id="KW-1133">Transmembrane helix</keyword>
<keyword id="KW-0813">Transport</keyword>
<sequence length="563" mass="62787">MLVEEKKSGIIDSILERLGINEAPLFRTPDYMYNISYWLGAMVAASFAYTIITGLFLLLYYQPAFAYQSTQTIINSVPYGSVLLFSHLYGSYIMILLAYIHMFRNFYKGAYKKPRELQWVTGVLLLALTLGASFFGYSLVSDVLGVNAIDIGDQLLVGTGIPGATAIVGWLFGPGGSAALSSNPLVRSELFDRLLGWHIIMVFLLGVLFLFHFMLSERYGMTPATREKPKVPSYYTKEEQEKFNPWWPRNFVYMLSIVLITWGIILFVPNLLANINGLPIVINPYPAPQAGSPQAVSVQPYPPWFFLFLFKLVDFLLPNGIPITPILTIALLVVGLVILMLLPFLDPSDSLYVTRRKFWTWIMTTLAVYLVELSVWGYLEPGVPEPTSAQIEFLGPPLVIIGIIVYLWPTERKTKTVSTTATDSRVIKMNITPMEILLGAVGTLSFAATLFNFIQFPTLINGIILVPLGLFAIYALRRISFYVLGGKPVASVGNTSSRISLRKKIAFFGIIALFVVSLVLLGLMWTLPSVGPQATYAGMDLGVILLLWGVAIQLYHYEIFVKE</sequence>
<protein>
    <recommendedName>
        <fullName>Cytochrome b</fullName>
    </recommendedName>
</protein>
<name>CYB_SULAC</name>
<dbReference type="EMBL" id="X62643">
    <property type="protein sequence ID" value="CAA44511.1"/>
    <property type="molecule type" value="Genomic_DNA"/>
</dbReference>
<dbReference type="EMBL" id="CP000077">
    <property type="protein sequence ID" value="AAY81381.1"/>
    <property type="status" value="ALT_INIT"/>
    <property type="molecule type" value="Genomic_DNA"/>
</dbReference>
<dbReference type="PIR" id="S21043">
    <property type="entry name" value="S21043"/>
</dbReference>
<dbReference type="RefSeq" id="WP_015385765.1">
    <property type="nucleotide sequence ID" value="NC_007181.1"/>
</dbReference>
<dbReference type="SMR" id="P39480"/>
<dbReference type="STRING" id="330779.Saci_2087"/>
<dbReference type="TCDB" id="3.D.4.1.1">
    <property type="family name" value="the proton-translocating cytochrome oxidase (cox) superfamily"/>
</dbReference>
<dbReference type="GeneID" id="14552602"/>
<dbReference type="GeneID" id="78442447"/>
<dbReference type="KEGG" id="sai:Saci_2087"/>
<dbReference type="PATRIC" id="fig|330779.12.peg.2089"/>
<dbReference type="eggNOG" id="arCOG01721">
    <property type="taxonomic scope" value="Archaea"/>
</dbReference>
<dbReference type="HOGENOM" id="CLU_038033_0_0_2"/>
<dbReference type="BioCyc" id="MetaCyc:MONOMER-21019"/>
<dbReference type="BRENDA" id="7.1.1.4">
    <property type="organism ID" value="6160"/>
</dbReference>
<dbReference type="Proteomes" id="UP000001018">
    <property type="component" value="Chromosome"/>
</dbReference>
<dbReference type="GO" id="GO:0005886">
    <property type="term" value="C:plasma membrane"/>
    <property type="evidence" value="ECO:0007669"/>
    <property type="project" value="UniProtKB-SubCell"/>
</dbReference>
<dbReference type="GO" id="GO:0009055">
    <property type="term" value="F:electron transfer activity"/>
    <property type="evidence" value="ECO:0007669"/>
    <property type="project" value="InterPro"/>
</dbReference>
<dbReference type="GO" id="GO:0046872">
    <property type="term" value="F:metal ion binding"/>
    <property type="evidence" value="ECO:0007669"/>
    <property type="project" value="UniProtKB-KW"/>
</dbReference>
<dbReference type="GO" id="GO:0016491">
    <property type="term" value="F:oxidoreductase activity"/>
    <property type="evidence" value="ECO:0007669"/>
    <property type="project" value="InterPro"/>
</dbReference>
<dbReference type="GO" id="GO:0022904">
    <property type="term" value="P:respiratory electron transport chain"/>
    <property type="evidence" value="ECO:0007669"/>
    <property type="project" value="InterPro"/>
</dbReference>
<dbReference type="FunFam" id="1.20.810.10:FF:000012">
    <property type="entry name" value="Cytochrome b/b6 domain protein"/>
    <property type="match status" value="1"/>
</dbReference>
<dbReference type="Gene3D" id="1.20.810.10">
    <property type="entry name" value="Cytochrome Bc1 Complex, Chain C"/>
    <property type="match status" value="1"/>
</dbReference>
<dbReference type="InterPro" id="IPR005798">
    <property type="entry name" value="Cyt_b/b6_C"/>
</dbReference>
<dbReference type="InterPro" id="IPR036150">
    <property type="entry name" value="Cyt_b/b6_C_sf"/>
</dbReference>
<dbReference type="InterPro" id="IPR005797">
    <property type="entry name" value="Cyt_b/b6_N"/>
</dbReference>
<dbReference type="InterPro" id="IPR027387">
    <property type="entry name" value="Cytb/b6-like_sf"/>
</dbReference>
<dbReference type="InterPro" id="IPR053595">
    <property type="entry name" value="Cytochrome_b-type_ET"/>
</dbReference>
<dbReference type="InterPro" id="IPR016174">
    <property type="entry name" value="Di-haem_cyt_TM"/>
</dbReference>
<dbReference type="NCBIfam" id="NF041076">
    <property type="entry name" value="cyt_b_SoxC"/>
    <property type="match status" value="1"/>
</dbReference>
<dbReference type="PANTHER" id="PTHR19271">
    <property type="entry name" value="CYTOCHROME B"/>
    <property type="match status" value="1"/>
</dbReference>
<dbReference type="PANTHER" id="PTHR19271:SF16">
    <property type="entry name" value="CYTOCHROME B"/>
    <property type="match status" value="1"/>
</dbReference>
<dbReference type="Pfam" id="PF13631">
    <property type="entry name" value="Cytochrom_B_N_2"/>
    <property type="match status" value="1"/>
</dbReference>
<dbReference type="SUPFAM" id="SSF81648">
    <property type="entry name" value="a domain/subunit of cytochrome bc1 complex (Ubiquinol-cytochrome c reductase)"/>
    <property type="match status" value="1"/>
</dbReference>
<dbReference type="SUPFAM" id="SSF81342">
    <property type="entry name" value="Transmembrane di-heme cytochromes"/>
    <property type="match status" value="1"/>
</dbReference>
<dbReference type="PROSITE" id="PS51003">
    <property type="entry name" value="CYTB_CTER"/>
    <property type="match status" value="1"/>
</dbReference>
<dbReference type="PROSITE" id="PS51002">
    <property type="entry name" value="CYTB_NTER"/>
    <property type="match status" value="1"/>
</dbReference>
<reference key="1">
    <citation type="journal article" date="1992" name="EMBO J.">
        <title>An archaebacterial terminal oxidase combines core structures of two mitochondrial respiratory complexes.</title>
        <authorList>
            <person name="Luebben M."/>
            <person name="Kolmerer B."/>
            <person name="Saraste M."/>
        </authorList>
    </citation>
    <scope>NUCLEOTIDE SEQUENCE [GENOMIC DNA]</scope>
    <source>
        <strain>ATCC 33909 / DSM 639 / JCM 8929 / NBRC 15157 / NCIMB 11770</strain>
    </source>
</reference>
<reference key="2">
    <citation type="journal article" date="2005" name="J. Bacteriol.">
        <title>The genome of Sulfolobus acidocaldarius, a model organism of the Crenarchaeota.</title>
        <authorList>
            <person name="Chen L."/>
            <person name="Bruegger K."/>
            <person name="Skovgaard M."/>
            <person name="Redder P."/>
            <person name="She Q."/>
            <person name="Torarinsson E."/>
            <person name="Greve B."/>
            <person name="Awayez M."/>
            <person name="Zibat A."/>
            <person name="Klenk H.-P."/>
            <person name="Garrett R.A."/>
        </authorList>
    </citation>
    <scope>NUCLEOTIDE SEQUENCE [LARGE SCALE GENOMIC DNA]</scope>
    <source>
        <strain>ATCC 33909 / DSM 639 / JCM 8929 / NBRC 15157 / NCIMB 11770</strain>
    </source>
</reference>
<gene>
    <name type="primary">soxC</name>
    <name type="ordered locus">Saci_2087</name>
</gene>
<comment type="function">
    <text>Binds 2 heme groups (b586 and b606) which are not covalently bound to the protein.</text>
</comment>
<comment type="subunit">
    <text>It is a component of at least 2 distinct terminal oxidases, the quinol oxidase (SoxABC) and the alternate quinol oxidase with the core components SoxM and a Rieske Fe-S protein.</text>
</comment>
<comment type="subcellular location">
    <subcellularLocation>
        <location>Cell membrane</location>
        <topology>Multi-pass membrane protein</topology>
    </subcellularLocation>
</comment>
<comment type="similarity">
    <text evidence="2 3">Belongs to the cytochrome b family.</text>
</comment>
<comment type="sequence caution" evidence="4">
    <conflict type="erroneous initiation">
        <sequence resource="EMBL-CDS" id="AAY81381"/>
    </conflict>
</comment>